<name>SSAA1_STAAN</name>
<protein>
    <recommendedName>
        <fullName>Staphylococcal secretory antigen ssaA1</fullName>
    </recommendedName>
</protein>
<reference key="1">
    <citation type="journal article" date="2001" name="Lancet">
        <title>Whole genome sequencing of meticillin-resistant Staphylococcus aureus.</title>
        <authorList>
            <person name="Kuroda M."/>
            <person name="Ohta T."/>
            <person name="Uchiyama I."/>
            <person name="Baba T."/>
            <person name="Yuzawa H."/>
            <person name="Kobayashi I."/>
            <person name="Cui L."/>
            <person name="Oguchi A."/>
            <person name="Aoki K."/>
            <person name="Nagai Y."/>
            <person name="Lian J.-Q."/>
            <person name="Ito T."/>
            <person name="Kanamori M."/>
            <person name="Matsumaru H."/>
            <person name="Maruyama A."/>
            <person name="Murakami H."/>
            <person name="Hosoyama A."/>
            <person name="Mizutani-Ui Y."/>
            <person name="Takahashi N.K."/>
            <person name="Sawano T."/>
            <person name="Inoue R."/>
            <person name="Kaito C."/>
            <person name="Sekimizu K."/>
            <person name="Hirakawa H."/>
            <person name="Kuhara S."/>
            <person name="Goto S."/>
            <person name="Yabuzaki J."/>
            <person name="Kanehisa M."/>
            <person name="Yamashita A."/>
            <person name="Oshima K."/>
            <person name="Furuya K."/>
            <person name="Yoshino C."/>
            <person name="Shiba T."/>
            <person name="Hattori M."/>
            <person name="Ogasawara N."/>
            <person name="Hayashi H."/>
            <person name="Hiramatsu K."/>
        </authorList>
    </citation>
    <scope>NUCLEOTIDE SEQUENCE [LARGE SCALE GENOMIC DNA]</scope>
    <source>
        <strain>N315</strain>
    </source>
</reference>
<sequence length="255" mass="27589">MKKIVTATIATAGLATIAFAGHDAQAAEQNNNGYNSNDAQSYSYTYTIDAQGNYHYTWTGNWNPSQLTQNNTYYYNNYNTYSYNNASYNNYYNHSYQYNNYTNNSQTATNNYYTGGSGASYSTTSNNVHVTTTAAPSSNGRSISNGYASGSNLYTSGQCTYYVFDRVGGKIGSTWGNASNWANAAASSGYTVNNTPKVGAIMQTTQGYYGHVAYVEGVNSNGSVRVSEMNYGHGAGVVTSRTISANQAGSYNFIH</sequence>
<evidence type="ECO:0000250" key="1"/>
<evidence type="ECO:0000255" key="2"/>
<evidence type="ECO:0000255" key="3">
    <source>
        <dbReference type="PROSITE-ProRule" id="PRU00048"/>
    </source>
</evidence>
<dbReference type="EMBL" id="BA000018">
    <property type="protein sequence ID" value="BAB43657.1"/>
    <property type="molecule type" value="Genomic_DNA"/>
</dbReference>
<dbReference type="PIR" id="G90061">
    <property type="entry name" value="G90061"/>
</dbReference>
<dbReference type="RefSeq" id="WP_000725225.1">
    <property type="nucleotide sequence ID" value="NC_002745.2"/>
</dbReference>
<dbReference type="SMR" id="Q7A3D7"/>
<dbReference type="EnsemblBacteria" id="BAB43657">
    <property type="protein sequence ID" value="BAB43657"/>
    <property type="gene ID" value="BAB43657"/>
</dbReference>
<dbReference type="KEGG" id="sau:SA2353"/>
<dbReference type="HOGENOM" id="CLU_016043_11_0_9"/>
<dbReference type="GO" id="GO:0005576">
    <property type="term" value="C:extracellular region"/>
    <property type="evidence" value="ECO:0007669"/>
    <property type="project" value="UniProtKB-SubCell"/>
</dbReference>
<dbReference type="Gene3D" id="3.90.1720.10">
    <property type="entry name" value="endopeptidase domain like (from Nostoc punctiforme)"/>
    <property type="match status" value="1"/>
</dbReference>
<dbReference type="InterPro" id="IPR007921">
    <property type="entry name" value="CHAP_dom"/>
</dbReference>
<dbReference type="InterPro" id="IPR038765">
    <property type="entry name" value="Papain-like_cys_pep_sf"/>
</dbReference>
<dbReference type="Pfam" id="PF05257">
    <property type="entry name" value="CHAP"/>
    <property type="match status" value="1"/>
</dbReference>
<dbReference type="SUPFAM" id="SSF54001">
    <property type="entry name" value="Cysteine proteinases"/>
    <property type="match status" value="1"/>
</dbReference>
<dbReference type="PROSITE" id="PS50911">
    <property type="entry name" value="CHAP"/>
    <property type="match status" value="1"/>
</dbReference>
<proteinExistence type="inferred from homology"/>
<keyword id="KW-0677">Repeat</keyword>
<keyword id="KW-0964">Secreted</keyword>
<keyword id="KW-0732">Signal</keyword>
<keyword id="KW-0843">Virulence</keyword>
<organism>
    <name type="scientific">Staphylococcus aureus (strain N315)</name>
    <dbReference type="NCBI Taxonomy" id="158879"/>
    <lineage>
        <taxon>Bacteria</taxon>
        <taxon>Bacillati</taxon>
        <taxon>Bacillota</taxon>
        <taxon>Bacilli</taxon>
        <taxon>Bacillales</taxon>
        <taxon>Staphylococcaceae</taxon>
        <taxon>Staphylococcus</taxon>
    </lineage>
</organism>
<comment type="function">
    <text evidence="1">Not known; immunogenic protein.</text>
</comment>
<comment type="subcellular location">
    <subcellularLocation>
        <location evidence="1">Secreted</location>
    </subcellularLocation>
</comment>
<accession>Q7A3D7</accession>
<gene>
    <name type="primary">ssaA1</name>
    <name type="ordered locus">SA2353</name>
</gene>
<feature type="signal peptide" evidence="2">
    <location>
        <begin position="1"/>
        <end position="26"/>
    </location>
</feature>
<feature type="chain" id="PRO_0000045310" description="Staphylococcal secretory antigen ssaA1">
    <location>
        <begin position="27"/>
        <end position="255"/>
    </location>
</feature>
<feature type="repeat" description="1">
    <location>
        <begin position="75"/>
        <end position="78"/>
    </location>
</feature>
<feature type="repeat" description="2">
    <location>
        <begin position="88"/>
        <end position="91"/>
    </location>
</feature>
<feature type="repeat" description="3">
    <location>
        <begin position="98"/>
        <end position="101"/>
    </location>
</feature>
<feature type="domain" description="Peptidase C51" evidence="3">
    <location>
        <begin position="134"/>
        <end position="255"/>
    </location>
</feature>
<feature type="region of interest" description="3 X 4 AA repeats of Y-N-N-Y">
    <location>
        <begin position="75"/>
        <end position="101"/>
    </location>
</feature>